<reference key="1">
    <citation type="journal article" date="2007" name="Genome Biol.">
        <title>Characterization and modeling of the Haemophilus influenzae core and supragenomes based on the complete genomic sequences of Rd and 12 clinical nontypeable strains.</title>
        <authorList>
            <person name="Hogg J.S."/>
            <person name="Hu F.Z."/>
            <person name="Janto B."/>
            <person name="Boissy R."/>
            <person name="Hayes J."/>
            <person name="Keefe R."/>
            <person name="Post J.C."/>
            <person name="Ehrlich G.D."/>
        </authorList>
    </citation>
    <scope>NUCLEOTIDE SEQUENCE [LARGE SCALE GENOMIC DNA]</scope>
    <source>
        <strain>PittGG</strain>
    </source>
</reference>
<organism>
    <name type="scientific">Haemophilus influenzae (strain PittGG)</name>
    <dbReference type="NCBI Taxonomy" id="374931"/>
    <lineage>
        <taxon>Bacteria</taxon>
        <taxon>Pseudomonadati</taxon>
        <taxon>Pseudomonadota</taxon>
        <taxon>Gammaproteobacteria</taxon>
        <taxon>Pasteurellales</taxon>
        <taxon>Pasteurellaceae</taxon>
        <taxon>Haemophilus</taxon>
    </lineage>
</organism>
<name>PROB_HAEIG</name>
<comment type="function">
    <text evidence="1">Catalyzes the transfer of a phosphate group to glutamate to form L-glutamate 5-phosphate.</text>
</comment>
<comment type="catalytic activity">
    <reaction evidence="1">
        <text>L-glutamate + ATP = L-glutamyl 5-phosphate + ADP</text>
        <dbReference type="Rhea" id="RHEA:14877"/>
        <dbReference type="ChEBI" id="CHEBI:29985"/>
        <dbReference type="ChEBI" id="CHEBI:30616"/>
        <dbReference type="ChEBI" id="CHEBI:58274"/>
        <dbReference type="ChEBI" id="CHEBI:456216"/>
        <dbReference type="EC" id="2.7.2.11"/>
    </reaction>
</comment>
<comment type="pathway">
    <text evidence="1">Amino-acid biosynthesis; L-proline biosynthesis; L-glutamate 5-semialdehyde from L-glutamate: step 1/2.</text>
</comment>
<comment type="subcellular location">
    <subcellularLocation>
        <location evidence="1">Cytoplasm</location>
    </subcellularLocation>
</comment>
<comment type="similarity">
    <text evidence="1">Belongs to the glutamate 5-kinase family.</text>
</comment>
<sequence length="368" mass="40114">MNKKTIVVKFGTSTLTQGSPKLNSPHMMEIVRQIAQLHNDGFRIVIVTSGAIAAGRHYLNHPQLPPTIASKQLLAAVGQSQLIQAWEKLFAIYDIHIGQLLLTRADIEDRERFLNARDTLHALLDNHIIPVINENDAVATAEIKVGDNDNLSALVAILVQAEQLYLLTDQQGLFDSDPRKNSEAKLIPVVEQITDHIRSIAGGSGTNLGTGGMMTKIIAADVATRSGIETIIAPGNRPNVIADLAYEQNIGTKFIAHQSDRLESRKQWLFAAPSAGIITIDNGAQNAILEQNKSLLPAGIINVEGRFSRGEVVKIRTQSGKDIALGMPRYNSDSLQLIKGRKSADIENVLGYEYGAVAMHRDDMIILS</sequence>
<proteinExistence type="inferred from homology"/>
<feature type="chain" id="PRO_1000081064" description="Glutamate 5-kinase">
    <location>
        <begin position="1"/>
        <end position="368"/>
    </location>
</feature>
<feature type="domain" description="PUA" evidence="1">
    <location>
        <begin position="275"/>
        <end position="353"/>
    </location>
</feature>
<feature type="binding site" evidence="1">
    <location>
        <position position="9"/>
    </location>
    <ligand>
        <name>ATP</name>
        <dbReference type="ChEBI" id="CHEBI:30616"/>
    </ligand>
</feature>
<feature type="binding site" evidence="1">
    <location>
        <position position="49"/>
    </location>
    <ligand>
        <name>substrate</name>
    </ligand>
</feature>
<feature type="binding site" evidence="1">
    <location>
        <position position="136"/>
    </location>
    <ligand>
        <name>substrate</name>
    </ligand>
</feature>
<feature type="binding site" evidence="1">
    <location>
        <position position="148"/>
    </location>
    <ligand>
        <name>substrate</name>
    </ligand>
</feature>
<feature type="binding site" evidence="1">
    <location>
        <begin position="168"/>
        <end position="169"/>
    </location>
    <ligand>
        <name>ATP</name>
        <dbReference type="ChEBI" id="CHEBI:30616"/>
    </ligand>
</feature>
<feature type="binding site" evidence="1">
    <location>
        <begin position="210"/>
        <end position="216"/>
    </location>
    <ligand>
        <name>ATP</name>
        <dbReference type="ChEBI" id="CHEBI:30616"/>
    </ligand>
</feature>
<dbReference type="EC" id="2.7.2.11" evidence="1"/>
<dbReference type="EMBL" id="CP000672">
    <property type="protein sequence ID" value="ABR00450.1"/>
    <property type="molecule type" value="Genomic_DNA"/>
</dbReference>
<dbReference type="SMR" id="A5UI44"/>
<dbReference type="KEGG" id="hiq:CGSHiGG_08060"/>
<dbReference type="HOGENOM" id="CLU_025400_2_0_6"/>
<dbReference type="UniPathway" id="UPA00098">
    <property type="reaction ID" value="UER00359"/>
</dbReference>
<dbReference type="Proteomes" id="UP000001990">
    <property type="component" value="Chromosome"/>
</dbReference>
<dbReference type="GO" id="GO:0005829">
    <property type="term" value="C:cytosol"/>
    <property type="evidence" value="ECO:0007669"/>
    <property type="project" value="TreeGrafter"/>
</dbReference>
<dbReference type="GO" id="GO:0005524">
    <property type="term" value="F:ATP binding"/>
    <property type="evidence" value="ECO:0007669"/>
    <property type="project" value="UniProtKB-KW"/>
</dbReference>
<dbReference type="GO" id="GO:0004349">
    <property type="term" value="F:glutamate 5-kinase activity"/>
    <property type="evidence" value="ECO:0007669"/>
    <property type="project" value="UniProtKB-UniRule"/>
</dbReference>
<dbReference type="GO" id="GO:0003723">
    <property type="term" value="F:RNA binding"/>
    <property type="evidence" value="ECO:0007669"/>
    <property type="project" value="InterPro"/>
</dbReference>
<dbReference type="GO" id="GO:0055129">
    <property type="term" value="P:L-proline biosynthetic process"/>
    <property type="evidence" value="ECO:0007669"/>
    <property type="project" value="UniProtKB-UniRule"/>
</dbReference>
<dbReference type="CDD" id="cd04242">
    <property type="entry name" value="AAK_G5K_ProB"/>
    <property type="match status" value="1"/>
</dbReference>
<dbReference type="CDD" id="cd21157">
    <property type="entry name" value="PUA_G5K"/>
    <property type="match status" value="1"/>
</dbReference>
<dbReference type="FunFam" id="2.30.130.10:FF:000003">
    <property type="entry name" value="Glutamate 5-kinase"/>
    <property type="match status" value="1"/>
</dbReference>
<dbReference type="FunFam" id="3.40.1160.10:FF:000006">
    <property type="entry name" value="Glutamate 5-kinase"/>
    <property type="match status" value="1"/>
</dbReference>
<dbReference type="Gene3D" id="3.40.1160.10">
    <property type="entry name" value="Acetylglutamate kinase-like"/>
    <property type="match status" value="2"/>
</dbReference>
<dbReference type="Gene3D" id="2.30.130.10">
    <property type="entry name" value="PUA domain"/>
    <property type="match status" value="1"/>
</dbReference>
<dbReference type="HAMAP" id="MF_00456">
    <property type="entry name" value="ProB"/>
    <property type="match status" value="1"/>
</dbReference>
<dbReference type="InterPro" id="IPR036393">
    <property type="entry name" value="AceGlu_kinase-like_sf"/>
</dbReference>
<dbReference type="InterPro" id="IPR001048">
    <property type="entry name" value="Asp/Glu/Uridylate_kinase"/>
</dbReference>
<dbReference type="InterPro" id="IPR041739">
    <property type="entry name" value="G5K_ProB"/>
</dbReference>
<dbReference type="InterPro" id="IPR001057">
    <property type="entry name" value="Glu/AcGlu_kinase"/>
</dbReference>
<dbReference type="InterPro" id="IPR011529">
    <property type="entry name" value="Glu_5kinase"/>
</dbReference>
<dbReference type="InterPro" id="IPR005715">
    <property type="entry name" value="Glu_5kinase/COase_Synthase"/>
</dbReference>
<dbReference type="InterPro" id="IPR019797">
    <property type="entry name" value="Glutamate_5-kinase_CS"/>
</dbReference>
<dbReference type="InterPro" id="IPR002478">
    <property type="entry name" value="PUA"/>
</dbReference>
<dbReference type="InterPro" id="IPR015947">
    <property type="entry name" value="PUA-like_sf"/>
</dbReference>
<dbReference type="InterPro" id="IPR036974">
    <property type="entry name" value="PUA_sf"/>
</dbReference>
<dbReference type="NCBIfam" id="TIGR01027">
    <property type="entry name" value="proB"/>
    <property type="match status" value="1"/>
</dbReference>
<dbReference type="PANTHER" id="PTHR43654">
    <property type="entry name" value="GLUTAMATE 5-KINASE"/>
    <property type="match status" value="1"/>
</dbReference>
<dbReference type="PANTHER" id="PTHR43654:SF1">
    <property type="entry name" value="ISOPENTENYL PHOSPHATE KINASE"/>
    <property type="match status" value="1"/>
</dbReference>
<dbReference type="Pfam" id="PF00696">
    <property type="entry name" value="AA_kinase"/>
    <property type="match status" value="1"/>
</dbReference>
<dbReference type="Pfam" id="PF01472">
    <property type="entry name" value="PUA"/>
    <property type="match status" value="1"/>
</dbReference>
<dbReference type="PIRSF" id="PIRSF000729">
    <property type="entry name" value="GK"/>
    <property type="match status" value="1"/>
</dbReference>
<dbReference type="PRINTS" id="PR00474">
    <property type="entry name" value="GLU5KINASE"/>
</dbReference>
<dbReference type="SMART" id="SM00359">
    <property type="entry name" value="PUA"/>
    <property type="match status" value="1"/>
</dbReference>
<dbReference type="SUPFAM" id="SSF53633">
    <property type="entry name" value="Carbamate kinase-like"/>
    <property type="match status" value="1"/>
</dbReference>
<dbReference type="SUPFAM" id="SSF88697">
    <property type="entry name" value="PUA domain-like"/>
    <property type="match status" value="1"/>
</dbReference>
<dbReference type="PROSITE" id="PS00902">
    <property type="entry name" value="GLUTAMATE_5_KINASE"/>
    <property type="match status" value="1"/>
</dbReference>
<dbReference type="PROSITE" id="PS50890">
    <property type="entry name" value="PUA"/>
    <property type="match status" value="1"/>
</dbReference>
<evidence type="ECO:0000255" key="1">
    <source>
        <dbReference type="HAMAP-Rule" id="MF_00456"/>
    </source>
</evidence>
<protein>
    <recommendedName>
        <fullName evidence="1">Glutamate 5-kinase</fullName>
        <ecNumber evidence="1">2.7.2.11</ecNumber>
    </recommendedName>
    <alternativeName>
        <fullName evidence="1">Gamma-glutamyl kinase</fullName>
        <shortName evidence="1">GK</shortName>
    </alternativeName>
</protein>
<keyword id="KW-0028">Amino-acid biosynthesis</keyword>
<keyword id="KW-0067">ATP-binding</keyword>
<keyword id="KW-0963">Cytoplasm</keyword>
<keyword id="KW-0418">Kinase</keyword>
<keyword id="KW-0547">Nucleotide-binding</keyword>
<keyword id="KW-0641">Proline biosynthesis</keyword>
<keyword id="KW-0808">Transferase</keyword>
<gene>
    <name evidence="1" type="primary">proB</name>
    <name type="ordered locus">CGSHiGG_08060</name>
</gene>
<accession>A5UI44</accession>